<name>Y830_HELP2</name>
<proteinExistence type="inferred from homology"/>
<accession>B6JM54</accession>
<sequence length="114" mass="13168">MRFLNNKHREKGLKAEEEACGFLKSLGFEMVERNFFSQFGEIDIIALKKGVLHFIEVKSGENFDPIYAITPSKLKKMIKTIRCYLSQKDPNSDFCIDALIVKNGKFELLENITF</sequence>
<organism>
    <name type="scientific">Helicobacter pylori (strain P12)</name>
    <dbReference type="NCBI Taxonomy" id="570508"/>
    <lineage>
        <taxon>Bacteria</taxon>
        <taxon>Pseudomonadati</taxon>
        <taxon>Campylobacterota</taxon>
        <taxon>Epsilonproteobacteria</taxon>
        <taxon>Campylobacterales</taxon>
        <taxon>Helicobacteraceae</taxon>
        <taxon>Helicobacter</taxon>
    </lineage>
</organism>
<gene>
    <name type="ordered locus">HPP12_0830</name>
</gene>
<evidence type="ECO:0000255" key="1">
    <source>
        <dbReference type="HAMAP-Rule" id="MF_00048"/>
    </source>
</evidence>
<reference key="1">
    <citation type="submission" date="2008-10" db="EMBL/GenBank/DDBJ databases">
        <title>The complete genome sequence of Helicobacter pylori strain P12.</title>
        <authorList>
            <person name="Fischer W."/>
            <person name="Windhager L."/>
            <person name="Karnholz A."/>
            <person name="Zeiller M."/>
            <person name="Zimmer R."/>
            <person name="Haas R."/>
        </authorList>
    </citation>
    <scope>NUCLEOTIDE SEQUENCE [LARGE SCALE GENOMIC DNA]</scope>
    <source>
        <strain>P12</strain>
    </source>
</reference>
<dbReference type="EMBL" id="CP001217">
    <property type="protein sequence ID" value="ACJ07982.1"/>
    <property type="molecule type" value="Genomic_DNA"/>
</dbReference>
<dbReference type="SMR" id="B6JM54"/>
<dbReference type="KEGG" id="hpp:HPP12_0830"/>
<dbReference type="HOGENOM" id="CLU_115353_3_2_7"/>
<dbReference type="Proteomes" id="UP000008198">
    <property type="component" value="Chromosome"/>
</dbReference>
<dbReference type="GO" id="GO:0003676">
    <property type="term" value="F:nucleic acid binding"/>
    <property type="evidence" value="ECO:0007669"/>
    <property type="project" value="InterPro"/>
</dbReference>
<dbReference type="Gene3D" id="3.40.1350.10">
    <property type="match status" value="1"/>
</dbReference>
<dbReference type="HAMAP" id="MF_00048">
    <property type="entry name" value="UPF0102"/>
    <property type="match status" value="1"/>
</dbReference>
<dbReference type="InterPro" id="IPR011335">
    <property type="entry name" value="Restrct_endonuc-II-like"/>
</dbReference>
<dbReference type="InterPro" id="IPR011856">
    <property type="entry name" value="tRNA_endonuc-like_dom_sf"/>
</dbReference>
<dbReference type="InterPro" id="IPR003509">
    <property type="entry name" value="UPF0102_YraN-like"/>
</dbReference>
<dbReference type="NCBIfam" id="NF009152">
    <property type="entry name" value="PRK12497.2-4"/>
    <property type="match status" value="1"/>
</dbReference>
<dbReference type="PANTHER" id="PTHR34039">
    <property type="entry name" value="UPF0102 PROTEIN YRAN"/>
    <property type="match status" value="1"/>
</dbReference>
<dbReference type="PANTHER" id="PTHR34039:SF1">
    <property type="entry name" value="UPF0102 PROTEIN YRAN"/>
    <property type="match status" value="1"/>
</dbReference>
<dbReference type="Pfam" id="PF02021">
    <property type="entry name" value="UPF0102"/>
    <property type="match status" value="1"/>
</dbReference>
<dbReference type="SUPFAM" id="SSF52980">
    <property type="entry name" value="Restriction endonuclease-like"/>
    <property type="match status" value="1"/>
</dbReference>
<protein>
    <recommendedName>
        <fullName evidence="1">UPF0102 protein HPP12_0830</fullName>
    </recommendedName>
</protein>
<comment type="similarity">
    <text evidence="1">Belongs to the UPF0102 family.</text>
</comment>
<feature type="chain" id="PRO_1000091244" description="UPF0102 protein HPP12_0830">
    <location>
        <begin position="1"/>
        <end position="114"/>
    </location>
</feature>